<accession>Q13J37</accession>
<gene>
    <name type="primary">acyP</name>
    <name type="ordered locus">Bxeno_B2934</name>
    <name type="ORF">Bxe_B0023</name>
</gene>
<evidence type="ECO:0000255" key="1">
    <source>
        <dbReference type="PROSITE-ProRule" id="PRU00520"/>
    </source>
</evidence>
<evidence type="ECO:0000256" key="2">
    <source>
        <dbReference type="SAM" id="MobiDB-lite"/>
    </source>
</evidence>
<evidence type="ECO:0000305" key="3"/>
<sequence>MAPDLDQRIETYYVRVRGTVQGVGFRHATVRQAHALGIKGWVANLDDGSVEAMLQGSANQVDRMLSWLRHGPPAARVTEVSGEERSTEKRYERFEQH</sequence>
<keyword id="KW-0378">Hydrolase</keyword>
<keyword id="KW-1185">Reference proteome</keyword>
<proteinExistence type="inferred from homology"/>
<dbReference type="EC" id="3.6.1.7"/>
<dbReference type="EMBL" id="CP000271">
    <property type="protein sequence ID" value="ABE35902.1"/>
    <property type="molecule type" value="Genomic_DNA"/>
</dbReference>
<dbReference type="RefSeq" id="WP_007178616.1">
    <property type="nucleotide sequence ID" value="NZ_CP008762.1"/>
</dbReference>
<dbReference type="SMR" id="Q13J37"/>
<dbReference type="STRING" id="266265.Bxe_B0023"/>
<dbReference type="KEGG" id="bxb:DR64_5387"/>
<dbReference type="KEGG" id="bxe:Bxe_B0023"/>
<dbReference type="eggNOG" id="COG1254">
    <property type="taxonomic scope" value="Bacteria"/>
</dbReference>
<dbReference type="OrthoDB" id="5295388at2"/>
<dbReference type="Proteomes" id="UP000001817">
    <property type="component" value="Chromosome 2"/>
</dbReference>
<dbReference type="GO" id="GO:0003998">
    <property type="term" value="F:acylphosphatase activity"/>
    <property type="evidence" value="ECO:0007669"/>
    <property type="project" value="UniProtKB-EC"/>
</dbReference>
<dbReference type="Gene3D" id="3.30.70.100">
    <property type="match status" value="1"/>
</dbReference>
<dbReference type="InterPro" id="IPR020456">
    <property type="entry name" value="Acylphosphatase"/>
</dbReference>
<dbReference type="InterPro" id="IPR001792">
    <property type="entry name" value="Acylphosphatase-like_dom"/>
</dbReference>
<dbReference type="InterPro" id="IPR036046">
    <property type="entry name" value="Acylphosphatase-like_dom_sf"/>
</dbReference>
<dbReference type="InterPro" id="IPR017968">
    <property type="entry name" value="Acylphosphatase_CS"/>
</dbReference>
<dbReference type="NCBIfam" id="NF010998">
    <property type="entry name" value="PRK14424.1"/>
    <property type="match status" value="1"/>
</dbReference>
<dbReference type="PANTHER" id="PTHR47268">
    <property type="entry name" value="ACYLPHOSPHATASE"/>
    <property type="match status" value="1"/>
</dbReference>
<dbReference type="PANTHER" id="PTHR47268:SF4">
    <property type="entry name" value="ACYLPHOSPHATASE"/>
    <property type="match status" value="1"/>
</dbReference>
<dbReference type="Pfam" id="PF00708">
    <property type="entry name" value="Acylphosphatase"/>
    <property type="match status" value="1"/>
</dbReference>
<dbReference type="PRINTS" id="PR00112">
    <property type="entry name" value="ACYLPHPHTASE"/>
</dbReference>
<dbReference type="SUPFAM" id="SSF54975">
    <property type="entry name" value="Acylphosphatase/BLUF domain-like"/>
    <property type="match status" value="1"/>
</dbReference>
<dbReference type="PROSITE" id="PS00150">
    <property type="entry name" value="ACYLPHOSPHATASE_1"/>
    <property type="match status" value="1"/>
</dbReference>
<dbReference type="PROSITE" id="PS00151">
    <property type="entry name" value="ACYLPHOSPHATASE_2"/>
    <property type="match status" value="1"/>
</dbReference>
<dbReference type="PROSITE" id="PS51160">
    <property type="entry name" value="ACYLPHOSPHATASE_3"/>
    <property type="match status" value="1"/>
</dbReference>
<name>ACYP_PARXL</name>
<organism>
    <name type="scientific">Paraburkholderia xenovorans (strain LB400)</name>
    <dbReference type="NCBI Taxonomy" id="266265"/>
    <lineage>
        <taxon>Bacteria</taxon>
        <taxon>Pseudomonadati</taxon>
        <taxon>Pseudomonadota</taxon>
        <taxon>Betaproteobacteria</taxon>
        <taxon>Burkholderiales</taxon>
        <taxon>Burkholderiaceae</taxon>
        <taxon>Paraburkholderia</taxon>
    </lineage>
</organism>
<feature type="chain" id="PRO_0000326678" description="Acylphosphatase">
    <location>
        <begin position="1"/>
        <end position="97"/>
    </location>
</feature>
<feature type="domain" description="Acylphosphatase-like" evidence="1">
    <location>
        <begin position="11"/>
        <end position="97"/>
    </location>
</feature>
<feature type="region of interest" description="Disordered" evidence="2">
    <location>
        <begin position="76"/>
        <end position="97"/>
    </location>
</feature>
<feature type="compositionally biased region" description="Basic and acidic residues" evidence="2">
    <location>
        <begin position="82"/>
        <end position="97"/>
    </location>
</feature>
<feature type="active site" evidence="1">
    <location>
        <position position="26"/>
    </location>
</feature>
<feature type="active site" evidence="1">
    <location>
        <position position="44"/>
    </location>
</feature>
<reference key="1">
    <citation type="journal article" date="2006" name="Proc. Natl. Acad. Sci. U.S.A.">
        <title>Burkholderia xenovorans LB400 harbors a multi-replicon, 9.73-Mbp genome shaped for versatility.</title>
        <authorList>
            <person name="Chain P.S.G."/>
            <person name="Denef V.J."/>
            <person name="Konstantinidis K.T."/>
            <person name="Vergez L.M."/>
            <person name="Agullo L."/>
            <person name="Reyes V.L."/>
            <person name="Hauser L."/>
            <person name="Cordova M."/>
            <person name="Gomez L."/>
            <person name="Gonzalez M."/>
            <person name="Land M."/>
            <person name="Lao V."/>
            <person name="Larimer F."/>
            <person name="LiPuma J.J."/>
            <person name="Mahenthiralingam E."/>
            <person name="Malfatti S.A."/>
            <person name="Marx C.J."/>
            <person name="Parnell J.J."/>
            <person name="Ramette A."/>
            <person name="Richardson P."/>
            <person name="Seeger M."/>
            <person name="Smith D."/>
            <person name="Spilker T."/>
            <person name="Sul W.J."/>
            <person name="Tsoi T.V."/>
            <person name="Ulrich L.E."/>
            <person name="Zhulin I.B."/>
            <person name="Tiedje J.M."/>
        </authorList>
    </citation>
    <scope>NUCLEOTIDE SEQUENCE [LARGE SCALE GENOMIC DNA]</scope>
    <source>
        <strain>LB400</strain>
    </source>
</reference>
<protein>
    <recommendedName>
        <fullName>Acylphosphatase</fullName>
        <ecNumber>3.6.1.7</ecNumber>
    </recommendedName>
    <alternativeName>
        <fullName>Acylphosphate phosphohydrolase</fullName>
    </alternativeName>
</protein>
<comment type="catalytic activity">
    <reaction>
        <text>an acyl phosphate + H2O = a carboxylate + phosphate + H(+)</text>
        <dbReference type="Rhea" id="RHEA:14965"/>
        <dbReference type="ChEBI" id="CHEBI:15377"/>
        <dbReference type="ChEBI" id="CHEBI:15378"/>
        <dbReference type="ChEBI" id="CHEBI:29067"/>
        <dbReference type="ChEBI" id="CHEBI:43474"/>
        <dbReference type="ChEBI" id="CHEBI:59918"/>
        <dbReference type="EC" id="3.6.1.7"/>
    </reaction>
</comment>
<comment type="similarity">
    <text evidence="3">Belongs to the acylphosphatase family.</text>
</comment>